<protein>
    <recommendedName>
        <fullName>Glucagon-1</fullName>
    </recommendedName>
    <component>
        <recommendedName>
            <fullName>Glucagon-1</fullName>
        </recommendedName>
    </component>
    <component>
        <recommendedName>
            <fullName>Glucagon-like peptide 1-1</fullName>
        </recommendedName>
    </component>
</protein>
<reference key="1">
    <citation type="journal article" date="1986" name="Regul. Pept.">
        <title>Isolation and structures of coho salmon (Oncorhynchus kisutch) glucagon and glucagon-like peptide.</title>
        <authorList>
            <person name="Plisetskaya E."/>
            <person name="Pollock H.G."/>
            <person name="Rouse J.B."/>
            <person name="Hamilton J.W."/>
            <person name="Kimmel J.R."/>
            <person name="Gorbman A."/>
        </authorList>
    </citation>
    <scope>PROTEIN SEQUENCE</scope>
</reference>
<name>GLUC1_ONCKI</name>
<accession>P07449</accession>
<sequence length="68" mass="7819">HSEGTFSNDYSKYQEERMAQDFVQWLMNSXXXXXXXXHADGTYTSNVSTYLQDQAAKDFVSWLKSGRA</sequence>
<gene>
    <name type="primary">gcg</name>
</gene>
<feature type="peptide" id="PRO_0000011355" description="Glucagon-1">
    <location>
        <begin position="1"/>
        <end position="29"/>
    </location>
</feature>
<feature type="peptide" id="PRO_0000011356" description="Glucagon-like peptide 1-1">
    <location>
        <begin position="38"/>
        <end position="68"/>
    </location>
</feature>
<feature type="non-terminal residue">
    <location>
        <position position="1"/>
    </location>
</feature>
<feature type="non-terminal residue">
    <location>
        <position position="68"/>
    </location>
</feature>
<keyword id="KW-0903">Direct protein sequencing</keyword>
<keyword id="KW-0372">Hormone</keyword>
<keyword id="KW-1185">Reference proteome</keyword>
<keyword id="KW-0964">Secreted</keyword>
<proteinExistence type="evidence at protein level"/>
<comment type="function">
    <text>Promotes hydrolysis of glycogen and lipids, and raises the blood sugar level.</text>
</comment>
<comment type="subcellular location">
    <subcellularLocation>
        <location>Secreted</location>
    </subcellularLocation>
</comment>
<comment type="induction">
    <text>Produced in the A cells of the islets of Langerhans in response to a drop in blood sugar concentration.</text>
</comment>
<comment type="miscellaneous">
    <text>X's in the sequence were included by homology with American goosefish sequences.</text>
</comment>
<comment type="miscellaneous">
    <text>Gln-14 is a unique substitution from leucine in other known glucagon sequences and glucagon-like peptides.</text>
</comment>
<comment type="similarity">
    <text evidence="1">Belongs to the glucagon family.</text>
</comment>
<dbReference type="PIR" id="JP0103">
    <property type="entry name" value="GCONC"/>
</dbReference>
<dbReference type="Proteomes" id="UP000694557">
    <property type="component" value="Unplaced"/>
</dbReference>
<dbReference type="GO" id="GO:0005576">
    <property type="term" value="C:extracellular region"/>
    <property type="evidence" value="ECO:0007669"/>
    <property type="project" value="UniProtKB-SubCell"/>
</dbReference>
<dbReference type="GO" id="GO:0031769">
    <property type="term" value="F:glucagon receptor binding"/>
    <property type="evidence" value="ECO:0007669"/>
    <property type="project" value="TreeGrafter"/>
</dbReference>
<dbReference type="GO" id="GO:0005179">
    <property type="term" value="F:hormone activity"/>
    <property type="evidence" value="ECO:0007669"/>
    <property type="project" value="UniProtKB-KW"/>
</dbReference>
<dbReference type="GO" id="GO:0042594">
    <property type="term" value="P:response to starvation"/>
    <property type="evidence" value="ECO:0007669"/>
    <property type="project" value="TreeGrafter"/>
</dbReference>
<dbReference type="Gene3D" id="6.10.250.590">
    <property type="match status" value="2"/>
</dbReference>
<dbReference type="InterPro" id="IPR015550">
    <property type="entry name" value="Glucagon"/>
</dbReference>
<dbReference type="InterPro" id="IPR000532">
    <property type="entry name" value="Glucagon_GIP_secretin_VIP"/>
</dbReference>
<dbReference type="PANTHER" id="PTHR11418">
    <property type="entry name" value="GLUCAGON"/>
    <property type="match status" value="1"/>
</dbReference>
<dbReference type="PANTHER" id="PTHR11418:SF0">
    <property type="entry name" value="PRO-GLUCAGON"/>
    <property type="match status" value="1"/>
</dbReference>
<dbReference type="Pfam" id="PF00123">
    <property type="entry name" value="Hormone_2"/>
    <property type="match status" value="2"/>
</dbReference>
<dbReference type="SMART" id="SM00070">
    <property type="entry name" value="GLUCA"/>
    <property type="match status" value="2"/>
</dbReference>
<dbReference type="PROSITE" id="PS00260">
    <property type="entry name" value="GLUCAGON"/>
    <property type="match status" value="2"/>
</dbReference>
<organism>
    <name type="scientific">Oncorhynchus kisutch</name>
    <name type="common">Coho salmon</name>
    <name type="synonym">Salmo kisutch</name>
    <dbReference type="NCBI Taxonomy" id="8019"/>
    <lineage>
        <taxon>Eukaryota</taxon>
        <taxon>Metazoa</taxon>
        <taxon>Chordata</taxon>
        <taxon>Craniata</taxon>
        <taxon>Vertebrata</taxon>
        <taxon>Euteleostomi</taxon>
        <taxon>Actinopterygii</taxon>
        <taxon>Neopterygii</taxon>
        <taxon>Teleostei</taxon>
        <taxon>Protacanthopterygii</taxon>
        <taxon>Salmoniformes</taxon>
        <taxon>Salmonidae</taxon>
        <taxon>Salmoninae</taxon>
        <taxon>Oncorhynchus</taxon>
    </lineage>
</organism>
<evidence type="ECO:0000305" key="1"/>